<comment type="function">
    <text evidence="1">Involved in the metabolism of galactose. Catalyzes the conversion of UDP-galactose (UDP-Gal) to UDP-glucose (UDP-Glc) through a mechanism involving the transient reduction of NAD (By similarity).</text>
</comment>
<comment type="catalytic activity">
    <reaction>
        <text>UDP-alpha-D-glucose = UDP-alpha-D-galactose</text>
        <dbReference type="Rhea" id="RHEA:22168"/>
        <dbReference type="ChEBI" id="CHEBI:58885"/>
        <dbReference type="ChEBI" id="CHEBI:66914"/>
        <dbReference type="EC" id="5.1.3.2"/>
    </reaction>
</comment>
<comment type="cofactor">
    <cofactor evidence="1">
        <name>NAD(+)</name>
        <dbReference type="ChEBI" id="CHEBI:57540"/>
    </cofactor>
</comment>
<comment type="pathway">
    <text>Carbohydrate metabolism; galactose metabolism.</text>
</comment>
<comment type="subunit">
    <text evidence="1">Homodimer.</text>
</comment>
<comment type="similarity">
    <text evidence="2">Belongs to the NAD(P)-dependent epimerase/dehydratase family.</text>
</comment>
<comment type="sequence caution" evidence="2">
    <conflict type="erroneous initiation">
        <sequence resource="EMBL-CDS" id="AAN58602"/>
    </conflict>
    <text>Extended N-terminus.</text>
</comment>
<proteinExistence type="inferred from homology"/>
<organism>
    <name type="scientific">Streptococcus mutans serotype c (strain ATCC 700610 / UA159)</name>
    <dbReference type="NCBI Taxonomy" id="210007"/>
    <lineage>
        <taxon>Bacteria</taxon>
        <taxon>Bacillati</taxon>
        <taxon>Bacillota</taxon>
        <taxon>Bacilli</taxon>
        <taxon>Lactobacillales</taxon>
        <taxon>Streptococcaceae</taxon>
        <taxon>Streptococcus</taxon>
    </lineage>
</organism>
<protein>
    <recommendedName>
        <fullName>UDP-glucose 4-epimerase</fullName>
        <ecNumber>5.1.3.2</ecNumber>
    </recommendedName>
    <alternativeName>
        <fullName>Galactowaldenase</fullName>
    </alternativeName>
    <alternativeName>
        <fullName>UDP-galactose 4-epimerase</fullName>
    </alternativeName>
</protein>
<feature type="chain" id="PRO_0000183220" description="UDP-glucose 4-epimerase">
    <location>
        <begin position="1"/>
        <end position="333"/>
    </location>
</feature>
<feature type="active site" description="Proton acceptor" evidence="1">
    <location>
        <position position="143"/>
    </location>
</feature>
<feature type="binding site" evidence="1">
    <location>
        <begin position="11"/>
        <end position="12"/>
    </location>
    <ligand>
        <name>NAD(+)</name>
        <dbReference type="ChEBI" id="CHEBI:57540"/>
    </ligand>
</feature>
<feature type="binding site" evidence="1">
    <location>
        <begin position="32"/>
        <end position="37"/>
    </location>
    <ligand>
        <name>NAD(+)</name>
        <dbReference type="ChEBI" id="CHEBI:57540"/>
    </ligand>
</feature>
<feature type="binding site" evidence="1">
    <location>
        <begin position="52"/>
        <end position="53"/>
    </location>
    <ligand>
        <name>NAD(+)</name>
        <dbReference type="ChEBI" id="CHEBI:57540"/>
    </ligand>
</feature>
<feature type="binding site" evidence="1">
    <location>
        <begin position="75"/>
        <end position="79"/>
    </location>
    <ligand>
        <name>NAD(+)</name>
        <dbReference type="ChEBI" id="CHEBI:57540"/>
    </ligand>
</feature>
<feature type="binding site" evidence="1">
    <location>
        <position position="94"/>
    </location>
    <ligand>
        <name>NAD(+)</name>
        <dbReference type="ChEBI" id="CHEBI:57540"/>
    </ligand>
</feature>
<feature type="binding site" evidence="1">
    <location>
        <position position="119"/>
    </location>
    <ligand>
        <name>NAD(+)</name>
        <dbReference type="ChEBI" id="CHEBI:57540"/>
    </ligand>
</feature>
<feature type="binding site" evidence="1">
    <location>
        <position position="119"/>
    </location>
    <ligand>
        <name>substrate</name>
    </ligand>
</feature>
<feature type="binding site" evidence="1">
    <location>
        <position position="143"/>
    </location>
    <ligand>
        <name>NAD(+)</name>
        <dbReference type="ChEBI" id="CHEBI:57540"/>
    </ligand>
</feature>
<feature type="binding site" evidence="1">
    <location>
        <position position="143"/>
    </location>
    <ligand>
        <name>substrate</name>
    </ligand>
</feature>
<feature type="binding site" evidence="1">
    <location>
        <position position="147"/>
    </location>
    <ligand>
        <name>NAD(+)</name>
        <dbReference type="ChEBI" id="CHEBI:57540"/>
    </ligand>
</feature>
<feature type="binding site" evidence="1">
    <location>
        <position position="171"/>
    </location>
    <ligand>
        <name>NAD(+)</name>
        <dbReference type="ChEBI" id="CHEBI:57540"/>
    </ligand>
</feature>
<feature type="binding site" evidence="1">
    <location>
        <position position="172"/>
    </location>
    <ligand>
        <name>substrate</name>
    </ligand>
</feature>
<feature type="binding site" evidence="1">
    <location>
        <begin position="191"/>
        <end position="192"/>
    </location>
    <ligand>
        <name>substrate</name>
    </ligand>
</feature>
<feature type="binding site" evidence="1">
    <location>
        <begin position="208"/>
        <end position="210"/>
    </location>
    <ligand>
        <name>substrate</name>
    </ligand>
</feature>
<feature type="binding site" evidence="1">
    <location>
        <position position="223"/>
    </location>
    <ligand>
        <name>substrate</name>
    </ligand>
</feature>
<feature type="binding site" evidence="1">
    <location>
        <begin position="284"/>
        <end position="287"/>
    </location>
    <ligand>
        <name>substrate</name>
    </ligand>
</feature>
<feature type="sequence conflict" description="In Ref. 1; AAB49738." evidence="2" ref="1">
    <original>D</original>
    <variation>N</variation>
    <location>
        <position position="127"/>
    </location>
</feature>
<feature type="sequence conflict" description="In Ref. 1; AAB49738." evidence="2" ref="1">
    <original>L</original>
    <variation>V</variation>
    <location>
        <position position="168"/>
    </location>
</feature>
<feature type="sequence conflict" description="In Ref. 1; AAB49738." evidence="2" ref="1">
    <original>A</original>
    <variation>R</variation>
    <location>
        <position position="234"/>
    </location>
</feature>
<feature type="sequence conflict" description="In Ref. 1; AAB49738." evidence="2" ref="1">
    <original>L</original>
    <variation>V</variation>
    <location>
        <position position="302"/>
    </location>
</feature>
<feature type="sequence conflict" description="In Ref. 1; AAB49738." evidence="2" ref="1">
    <original>Y</original>
    <variation>H</variation>
    <location>
        <position position="325"/>
    </location>
</feature>
<keyword id="KW-0119">Carbohydrate metabolism</keyword>
<keyword id="KW-0299">Galactose metabolism</keyword>
<keyword id="KW-0413">Isomerase</keyword>
<keyword id="KW-0520">NAD</keyword>
<keyword id="KW-1185">Reference proteome</keyword>
<name>GALE_STRMU</name>
<dbReference type="EC" id="5.1.3.2"/>
<dbReference type="EMBL" id="U21942">
    <property type="protein sequence ID" value="AAB49738.1"/>
    <property type="molecule type" value="Genomic_DNA"/>
</dbReference>
<dbReference type="EMBL" id="AE014133">
    <property type="protein sequence ID" value="AAN58602.1"/>
    <property type="status" value="ALT_INIT"/>
    <property type="molecule type" value="Genomic_DNA"/>
</dbReference>
<dbReference type="PIR" id="JC5313">
    <property type="entry name" value="JC5313"/>
</dbReference>
<dbReference type="RefSeq" id="NP_721296.1">
    <property type="nucleotide sequence ID" value="NC_004350.2"/>
</dbReference>
<dbReference type="RefSeq" id="WP_002262881.1">
    <property type="nucleotide sequence ID" value="NC_004350.2"/>
</dbReference>
<dbReference type="SMR" id="P96995"/>
<dbReference type="STRING" id="210007.SMU_888"/>
<dbReference type="KEGG" id="smu:SMU_888"/>
<dbReference type="PATRIC" id="fig|210007.7.peg.795"/>
<dbReference type="eggNOG" id="COG1087">
    <property type="taxonomic scope" value="Bacteria"/>
</dbReference>
<dbReference type="HOGENOM" id="CLU_007383_1_10_9"/>
<dbReference type="OrthoDB" id="9801785at2"/>
<dbReference type="UniPathway" id="UPA00214"/>
<dbReference type="Proteomes" id="UP000002512">
    <property type="component" value="Chromosome"/>
</dbReference>
<dbReference type="GO" id="GO:0003978">
    <property type="term" value="F:UDP-glucose 4-epimerase activity"/>
    <property type="evidence" value="ECO:0007669"/>
    <property type="project" value="UniProtKB-EC"/>
</dbReference>
<dbReference type="GO" id="GO:0033499">
    <property type="term" value="P:galactose catabolic process via UDP-galactose, Leloir pathway"/>
    <property type="evidence" value="ECO:0007669"/>
    <property type="project" value="TreeGrafter"/>
</dbReference>
<dbReference type="CDD" id="cd05247">
    <property type="entry name" value="UDP_G4E_1_SDR_e"/>
    <property type="match status" value="1"/>
</dbReference>
<dbReference type="Gene3D" id="3.40.50.720">
    <property type="entry name" value="NAD(P)-binding Rossmann-like Domain"/>
    <property type="match status" value="1"/>
</dbReference>
<dbReference type="Gene3D" id="3.90.25.10">
    <property type="entry name" value="UDP-galactose 4-epimerase, domain 1"/>
    <property type="match status" value="1"/>
</dbReference>
<dbReference type="InterPro" id="IPR001509">
    <property type="entry name" value="Epimerase_deHydtase"/>
</dbReference>
<dbReference type="InterPro" id="IPR036291">
    <property type="entry name" value="NAD(P)-bd_dom_sf"/>
</dbReference>
<dbReference type="InterPro" id="IPR005886">
    <property type="entry name" value="UDP_G4E"/>
</dbReference>
<dbReference type="NCBIfam" id="TIGR01179">
    <property type="entry name" value="galE"/>
    <property type="match status" value="1"/>
</dbReference>
<dbReference type="PANTHER" id="PTHR43725:SF53">
    <property type="entry name" value="UDP-ARABINOSE 4-EPIMERASE 1"/>
    <property type="match status" value="1"/>
</dbReference>
<dbReference type="PANTHER" id="PTHR43725">
    <property type="entry name" value="UDP-GLUCOSE 4-EPIMERASE"/>
    <property type="match status" value="1"/>
</dbReference>
<dbReference type="Pfam" id="PF01370">
    <property type="entry name" value="Epimerase"/>
    <property type="match status" value="1"/>
</dbReference>
<dbReference type="SUPFAM" id="SSF51735">
    <property type="entry name" value="NAD(P)-binding Rossmann-fold domains"/>
    <property type="match status" value="1"/>
</dbReference>
<sequence length="333" mass="36921">MAILVLGGAGYIGSHMVDRLIEKGEEEVVVVDSLVTGHRAAVHPAAKFYQGDLADREFMSMVFRENPDVDAVIHFAAYSLVAESMKKPLKYFDNNTAGMIKLLEVMSEFGVKYIVFSSTAATYGIPDEIPIKETTPQRPINPYGESKLMMETIMKWSDRAYGIKFVPLRYFNVAGAKPDGSIGEDHSPETHLLPIILQVAQGVREKIMIFGDDYNTPDGTNVRDYVHPFDLADAHLLALNYLRQGNPSTAFNLGSSTGFSNLQILEAARKVTGQKIPAEKAARRSGDPDTLIASSEKAREVLGWKPQFDDIEKIIASAWAWHSSYPKGYDDRD</sequence>
<accession>P96995</accession>
<gene>
    <name type="primary">galE</name>
    <name type="ordered locus">SMU_888</name>
</gene>
<reference key="1">
    <citation type="journal article" date="1996" name="Gene">
        <title>Organization and nucleotide sequence of the Streptococcus mutans galactose operon.</title>
        <authorList>
            <person name="Ajdic D."/>
            <person name="Sutcliffe I.C."/>
            <person name="Russell R.R.B."/>
            <person name="Ferretti J.J."/>
        </authorList>
    </citation>
    <scope>NUCLEOTIDE SEQUENCE [GENOMIC DNA]</scope>
    <source>
        <strain>Ingbritt</strain>
    </source>
</reference>
<reference key="2">
    <citation type="journal article" date="2002" name="Proc. Natl. Acad. Sci. U.S.A.">
        <title>Genome sequence of Streptococcus mutans UA159, a cariogenic dental pathogen.</title>
        <authorList>
            <person name="Ajdic D.J."/>
            <person name="McShan W.M."/>
            <person name="McLaughlin R.E."/>
            <person name="Savic G."/>
            <person name="Chang J."/>
            <person name="Carson M.B."/>
            <person name="Primeaux C."/>
            <person name="Tian R."/>
            <person name="Kenton S."/>
            <person name="Jia H.G."/>
            <person name="Lin S.P."/>
            <person name="Qian Y."/>
            <person name="Li S."/>
            <person name="Zhu H."/>
            <person name="Najar F.Z."/>
            <person name="Lai H."/>
            <person name="White J."/>
            <person name="Roe B.A."/>
            <person name="Ferretti J.J."/>
        </authorList>
    </citation>
    <scope>NUCLEOTIDE SEQUENCE [LARGE SCALE GENOMIC DNA]</scope>
    <source>
        <strain>ATCC 700610 / UA159</strain>
    </source>
</reference>
<evidence type="ECO:0000250" key="1"/>
<evidence type="ECO:0000305" key="2"/>